<accession>P0C5Y1</accession>
<accession>B2VQ39</accession>
<dbReference type="EMBL" id="DQ336395">
    <property type="protein sequence ID" value="ACD12713.1"/>
    <property type="molecule type" value="Genomic_DNA"/>
</dbReference>
<dbReference type="RefSeq" id="YP_003579823.1">
    <property type="nucleotide sequence ID" value="NC_007787.2"/>
</dbReference>
<dbReference type="SMR" id="P0C5Y1"/>
<dbReference type="GeneID" id="9086859"/>
<dbReference type="GO" id="GO:0005763">
    <property type="term" value="C:mitochondrial small ribosomal subunit"/>
    <property type="evidence" value="ECO:0000250"/>
    <property type="project" value="UniProtKB"/>
</dbReference>
<dbReference type="GO" id="GO:0003735">
    <property type="term" value="F:structural constituent of ribosome"/>
    <property type="evidence" value="ECO:0007669"/>
    <property type="project" value="InterPro"/>
</dbReference>
<dbReference type="GO" id="GO:0006412">
    <property type="term" value="P:translation"/>
    <property type="evidence" value="ECO:0007669"/>
    <property type="project" value="InterPro"/>
</dbReference>
<dbReference type="FunFam" id="1.10.287.1480:FF:000001">
    <property type="entry name" value="30S ribosomal protein S14"/>
    <property type="match status" value="1"/>
</dbReference>
<dbReference type="Gene3D" id="1.10.287.1480">
    <property type="match status" value="1"/>
</dbReference>
<dbReference type="InterPro" id="IPR001209">
    <property type="entry name" value="Ribosomal_uS14"/>
</dbReference>
<dbReference type="PANTHER" id="PTHR19836">
    <property type="entry name" value="30S RIBOSOMAL PROTEIN S14"/>
    <property type="match status" value="1"/>
</dbReference>
<dbReference type="PANTHER" id="PTHR19836:SF19">
    <property type="entry name" value="SMALL RIBOSOMAL SUBUNIT PROTEIN US14M"/>
    <property type="match status" value="1"/>
</dbReference>
<dbReference type="Pfam" id="PF00253">
    <property type="entry name" value="Ribosomal_S14"/>
    <property type="match status" value="1"/>
</dbReference>
<dbReference type="SUPFAM" id="SSF57716">
    <property type="entry name" value="Glucocorticoid receptor-like (DNA-binding domain)"/>
    <property type="match status" value="1"/>
</dbReference>
<organism>
    <name type="scientific">Dictyostelium citrinum</name>
    <name type="common">Slime mold</name>
    <dbReference type="NCBI Taxonomy" id="361072"/>
    <lineage>
        <taxon>Eukaryota</taxon>
        <taxon>Amoebozoa</taxon>
        <taxon>Evosea</taxon>
        <taxon>Eumycetozoa</taxon>
        <taxon>Dictyostelia</taxon>
        <taxon>Dictyosteliales</taxon>
        <taxon>Dictyosteliaceae</taxon>
        <taxon>Dictyostelium</taxon>
    </lineage>
</organism>
<sequence length="101" mass="12337">MKIIRKNKKDKERREQYKQAEQMKNMYKMLRRNELLDQETRNYFNMQVTSSEKNSSISRIKNRCVETGRSRGIISAYRISRLRFREYMKMGLISGVKKRSY</sequence>
<name>RT14_DICCI</name>
<feature type="chain" id="PRO_0000312401" description="Small ribosomal subunit protein uS14m">
    <location>
        <begin position="1"/>
        <end position="101"/>
    </location>
</feature>
<protein>
    <recommendedName>
        <fullName evidence="3">Small ribosomal subunit protein uS14m</fullName>
    </recommendedName>
    <alternativeName>
        <fullName>Ribosomal protein S14, mitochondrial</fullName>
    </alternativeName>
</protein>
<gene>
    <name type="primary">mrps14</name>
    <name type="synonym">rps14</name>
</gene>
<geneLocation type="mitochondrion"/>
<reference key="1">
    <citation type="journal article" date="2008" name="Mol. Biol. Evol.">
        <title>Mitochondrial genome evolution in the social amoebae.</title>
        <authorList>
            <person name="Heidel A.J."/>
            <person name="Gloeckner G."/>
        </authorList>
    </citation>
    <scope>NUCLEOTIDE SEQUENCE [LARGE SCALE GENOMIC DNA]</scope>
</reference>
<keyword id="KW-0496">Mitochondrion</keyword>
<keyword id="KW-0687">Ribonucleoprotein</keyword>
<keyword id="KW-0689">Ribosomal protein</keyword>
<comment type="subunit">
    <text evidence="1 2">Component of the mitochondrial ribosome small subunit (28S) which comprises a 12S rRNA and about 30 distinct proteins (By similarity). Interacts with LIAT1 (By similarity).</text>
</comment>
<comment type="subcellular location">
    <subcellularLocation>
        <location evidence="1">Mitochondrion</location>
    </subcellularLocation>
</comment>
<comment type="similarity">
    <text evidence="3">Belongs to the universal ribosomal protein uS14 family.</text>
</comment>
<proteinExistence type="inferred from homology"/>
<evidence type="ECO:0000250" key="1">
    <source>
        <dbReference type="UniProtKB" id="O60783"/>
    </source>
</evidence>
<evidence type="ECO:0000250" key="2">
    <source>
        <dbReference type="UniProtKB" id="Q9CR88"/>
    </source>
</evidence>
<evidence type="ECO:0000305" key="3"/>